<name>APAH_PASMU</name>
<dbReference type="EC" id="3.6.1.41"/>
<dbReference type="EMBL" id="AE004439">
    <property type="protein sequence ID" value="AAK03294.1"/>
    <property type="molecule type" value="Genomic_DNA"/>
</dbReference>
<dbReference type="RefSeq" id="WP_005751893.1">
    <property type="nucleotide sequence ID" value="NC_002663.1"/>
</dbReference>
<dbReference type="SMR" id="P57922"/>
<dbReference type="STRING" id="272843.PM1210"/>
<dbReference type="EnsemblBacteria" id="AAK03294">
    <property type="protein sequence ID" value="AAK03294"/>
    <property type="gene ID" value="PM1210"/>
</dbReference>
<dbReference type="KEGG" id="pmu:PM1210"/>
<dbReference type="HOGENOM" id="CLU_056184_2_0_6"/>
<dbReference type="OrthoDB" id="9807890at2"/>
<dbReference type="Proteomes" id="UP000000809">
    <property type="component" value="Chromosome"/>
</dbReference>
<dbReference type="GO" id="GO:0008803">
    <property type="term" value="F:bis(5'-nucleosyl)-tetraphosphatase (symmetrical) activity"/>
    <property type="evidence" value="ECO:0007669"/>
    <property type="project" value="UniProtKB-UniRule"/>
</dbReference>
<dbReference type="CDD" id="cd07422">
    <property type="entry name" value="MPP_ApaH"/>
    <property type="match status" value="1"/>
</dbReference>
<dbReference type="Gene3D" id="3.60.21.10">
    <property type="match status" value="1"/>
</dbReference>
<dbReference type="HAMAP" id="MF_00199">
    <property type="entry name" value="ApaH"/>
    <property type="match status" value="1"/>
</dbReference>
<dbReference type="InterPro" id="IPR004617">
    <property type="entry name" value="ApaH"/>
</dbReference>
<dbReference type="InterPro" id="IPR004843">
    <property type="entry name" value="Calcineurin-like_PHP_ApaH"/>
</dbReference>
<dbReference type="InterPro" id="IPR029052">
    <property type="entry name" value="Metallo-depent_PP-like"/>
</dbReference>
<dbReference type="NCBIfam" id="TIGR00668">
    <property type="entry name" value="apaH"/>
    <property type="match status" value="1"/>
</dbReference>
<dbReference type="NCBIfam" id="NF001204">
    <property type="entry name" value="PRK00166.1"/>
    <property type="match status" value="1"/>
</dbReference>
<dbReference type="PANTHER" id="PTHR40942">
    <property type="match status" value="1"/>
</dbReference>
<dbReference type="PANTHER" id="PTHR40942:SF4">
    <property type="entry name" value="CYTOCHROME C5"/>
    <property type="match status" value="1"/>
</dbReference>
<dbReference type="Pfam" id="PF00149">
    <property type="entry name" value="Metallophos"/>
    <property type="match status" value="1"/>
</dbReference>
<dbReference type="PIRSF" id="PIRSF000903">
    <property type="entry name" value="B5n-ttraPtase_sm"/>
    <property type="match status" value="1"/>
</dbReference>
<dbReference type="SUPFAM" id="SSF56300">
    <property type="entry name" value="Metallo-dependent phosphatases"/>
    <property type="match status" value="1"/>
</dbReference>
<proteinExistence type="inferred from homology"/>
<evidence type="ECO:0000250" key="1"/>
<evidence type="ECO:0000305" key="2"/>
<comment type="function">
    <text evidence="1">Hydrolyzes diadenosine 5',5'''-P1,P4-tetraphosphate to yield ADP.</text>
</comment>
<comment type="catalytic activity">
    <reaction>
        <text>P(1),P(4)-bis(5'-adenosyl) tetraphosphate + H2O = 2 ADP + 2 H(+)</text>
        <dbReference type="Rhea" id="RHEA:24252"/>
        <dbReference type="ChEBI" id="CHEBI:15377"/>
        <dbReference type="ChEBI" id="CHEBI:15378"/>
        <dbReference type="ChEBI" id="CHEBI:58141"/>
        <dbReference type="ChEBI" id="CHEBI:456216"/>
        <dbReference type="EC" id="3.6.1.41"/>
    </reaction>
</comment>
<comment type="similarity">
    <text evidence="2">Belongs to the Ap4A hydrolase family.</text>
</comment>
<feature type="chain" id="PRO_0000198001" description="Bis(5'-nucleosyl)-tetraphosphatase, symmetrical">
    <location>
        <begin position="1"/>
        <end position="275"/>
    </location>
</feature>
<protein>
    <recommendedName>
        <fullName>Bis(5'-nucleosyl)-tetraphosphatase, symmetrical</fullName>
        <ecNumber>3.6.1.41</ecNumber>
    </recommendedName>
    <alternativeName>
        <fullName>Ap4A hydrolase</fullName>
    </alternativeName>
    <alternativeName>
        <fullName>Diadenosine 5',5'''-P1,P4-tetraphosphate pyrophosphohydrolase</fullName>
    </alternativeName>
    <alternativeName>
        <fullName>Diadenosine tetraphosphatase</fullName>
    </alternativeName>
</protein>
<reference key="1">
    <citation type="journal article" date="2001" name="Proc. Natl. Acad. Sci. U.S.A.">
        <title>Complete genomic sequence of Pasteurella multocida Pm70.</title>
        <authorList>
            <person name="May B.J."/>
            <person name="Zhang Q."/>
            <person name="Li L.L."/>
            <person name="Paustian M.L."/>
            <person name="Whittam T.S."/>
            <person name="Kapur V."/>
        </authorList>
    </citation>
    <scope>NUCLEOTIDE SEQUENCE [LARGE SCALE GENOMIC DNA]</scope>
    <source>
        <strain>Pm70</strain>
    </source>
</reference>
<accession>P57922</accession>
<organism>
    <name type="scientific">Pasteurella multocida (strain Pm70)</name>
    <dbReference type="NCBI Taxonomy" id="272843"/>
    <lineage>
        <taxon>Bacteria</taxon>
        <taxon>Pseudomonadati</taxon>
        <taxon>Pseudomonadota</taxon>
        <taxon>Gammaproteobacteria</taxon>
        <taxon>Pasteurellales</taxon>
        <taxon>Pasteurellaceae</taxon>
        <taxon>Pasteurella</taxon>
    </lineage>
</organism>
<sequence length="275" mass="32225">MATYLVGDLQGCYDELQRLLEKVQFDSTQDQLYLVGDLVARGDKSLECLRFVKSLGKSAKTVLGNHDLHLISTALGIKKVKVRDRVDAIFHAPDFEELIDWLRHQPLLVHNEQQNFLMTHAGISPDWDLATAKQCAHEVENVLRHGDYHNLIENMYENRPDRWHDDLQGLDRLRYSINVFTRMRFCYWDHRLDFDCKLPPESAPEELTPWFNLANPLYQTIPIVFGHWASLVNTTTPNNIYALDTGCVWGNRMTMLRWEDKQYFSQHAVKNYRDF</sequence>
<keyword id="KW-0378">Hydrolase</keyword>
<keyword id="KW-1185">Reference proteome</keyword>
<gene>
    <name type="primary">apaH</name>
    <name type="ordered locus">PM1210</name>
</gene>